<organism>
    <name type="scientific">Listeria monocytogenes serotype 4a (strain HCC23)</name>
    <dbReference type="NCBI Taxonomy" id="552536"/>
    <lineage>
        <taxon>Bacteria</taxon>
        <taxon>Bacillati</taxon>
        <taxon>Bacillota</taxon>
        <taxon>Bacilli</taxon>
        <taxon>Bacillales</taxon>
        <taxon>Listeriaceae</taxon>
        <taxon>Listeria</taxon>
    </lineage>
</organism>
<evidence type="ECO:0000255" key="1">
    <source>
        <dbReference type="HAMAP-Rule" id="MF_01197"/>
    </source>
</evidence>
<sequence>MGLSNKFKSFFFLDEEEEYYEEEVAREPEPMQKKTKKEKPNKNRFYAVEEDDAKVVSMQGAQFSSRMVLAEPRVYAEAQELADYLKEYKSVVVNLQRISHDQATRIVDFLSGTVYALGGDIQRVGNNIFLCTPDNVEVDGSISEMLDEQNFM</sequence>
<keyword id="KW-0131">Cell cycle</keyword>
<keyword id="KW-0132">Cell division</keyword>
<keyword id="KW-0963">Cytoplasm</keyword>
<keyword id="KW-0717">Septation</keyword>
<dbReference type="EMBL" id="CP001175">
    <property type="protein sequence ID" value="ACK38889.1"/>
    <property type="molecule type" value="Genomic_DNA"/>
</dbReference>
<dbReference type="RefSeq" id="WP_003724067.1">
    <property type="nucleotide sequence ID" value="NC_011660.1"/>
</dbReference>
<dbReference type="SMR" id="B8DBQ3"/>
<dbReference type="KEGG" id="lmh:LMHCC_0532"/>
<dbReference type="HOGENOM" id="CLU_078499_4_1_9"/>
<dbReference type="GO" id="GO:0005737">
    <property type="term" value="C:cytoplasm"/>
    <property type="evidence" value="ECO:0007669"/>
    <property type="project" value="UniProtKB-SubCell"/>
</dbReference>
<dbReference type="GO" id="GO:0000917">
    <property type="term" value="P:division septum assembly"/>
    <property type="evidence" value="ECO:0007669"/>
    <property type="project" value="UniProtKB-KW"/>
</dbReference>
<dbReference type="GO" id="GO:0043093">
    <property type="term" value="P:FtsZ-dependent cytokinesis"/>
    <property type="evidence" value="ECO:0007669"/>
    <property type="project" value="UniProtKB-UniRule"/>
</dbReference>
<dbReference type="Gene3D" id="3.30.110.150">
    <property type="entry name" value="SepF-like protein"/>
    <property type="match status" value="1"/>
</dbReference>
<dbReference type="HAMAP" id="MF_01197">
    <property type="entry name" value="SepF"/>
    <property type="match status" value="1"/>
</dbReference>
<dbReference type="InterPro" id="IPR023052">
    <property type="entry name" value="Cell_div_SepF"/>
</dbReference>
<dbReference type="InterPro" id="IPR007561">
    <property type="entry name" value="Cell_div_SepF/SepF-rel"/>
</dbReference>
<dbReference type="InterPro" id="IPR038594">
    <property type="entry name" value="SepF-like_sf"/>
</dbReference>
<dbReference type="PANTHER" id="PTHR35798">
    <property type="entry name" value="CELL DIVISION PROTEIN SEPF"/>
    <property type="match status" value="1"/>
</dbReference>
<dbReference type="PANTHER" id="PTHR35798:SF1">
    <property type="entry name" value="CELL DIVISION PROTEIN SEPF"/>
    <property type="match status" value="1"/>
</dbReference>
<dbReference type="Pfam" id="PF04472">
    <property type="entry name" value="SepF"/>
    <property type="match status" value="1"/>
</dbReference>
<reference key="1">
    <citation type="journal article" date="2011" name="J. Bacteriol.">
        <title>Genome sequence of lineage III Listeria monocytogenes strain HCC23.</title>
        <authorList>
            <person name="Steele C.L."/>
            <person name="Donaldson J.R."/>
            <person name="Paul D."/>
            <person name="Banes M.M."/>
            <person name="Arick T."/>
            <person name="Bridges S.M."/>
            <person name="Lawrence M.L."/>
        </authorList>
    </citation>
    <scope>NUCLEOTIDE SEQUENCE [LARGE SCALE GENOMIC DNA]</scope>
    <source>
        <strain>HCC23</strain>
    </source>
</reference>
<feature type="chain" id="PRO_1000164536" description="Cell division protein SepF">
    <location>
        <begin position="1"/>
        <end position="152"/>
    </location>
</feature>
<gene>
    <name evidence="1" type="primary">sepF</name>
    <name type="ordered locus">LMHCC_0532</name>
</gene>
<accession>B8DBQ3</accession>
<name>SEPF_LISMH</name>
<proteinExistence type="inferred from homology"/>
<protein>
    <recommendedName>
        <fullName evidence="1">Cell division protein SepF</fullName>
    </recommendedName>
</protein>
<comment type="function">
    <text evidence="1">Cell division protein that is part of the divisome complex and is recruited early to the Z-ring. Probably stimulates Z-ring formation, perhaps through the cross-linking of FtsZ protofilaments. Its function overlaps with FtsA.</text>
</comment>
<comment type="subunit">
    <text evidence="1">Homodimer. Interacts with FtsZ.</text>
</comment>
<comment type="subcellular location">
    <subcellularLocation>
        <location evidence="1">Cytoplasm</location>
    </subcellularLocation>
    <text evidence="1">Localizes to the division site, in a FtsZ-dependent manner.</text>
</comment>
<comment type="similarity">
    <text evidence="1">Belongs to the SepF family.</text>
</comment>